<comment type="function">
    <text evidence="2">Component of the ubiquinol-cytochrome c reductase complex (complex III or cytochrome b-c1 complex) that is part of the mitochondrial respiratory chain. The b-c1 complex mediates electron transfer from ubiquinol to cytochrome c. Contributes to the generation of a proton gradient across the mitochondrial membrane that is then used for ATP synthesis.</text>
</comment>
<comment type="cofactor">
    <cofactor evidence="2">
        <name>heme b</name>
        <dbReference type="ChEBI" id="CHEBI:60344"/>
    </cofactor>
    <text evidence="2">Binds 2 heme b groups non-covalently.</text>
</comment>
<comment type="subunit">
    <text evidence="2">The cytochrome bc1 complex contains 11 subunits: 3 respiratory subunits (MT-CYB, CYC1 and UQCRFS1), 2 core proteins (UQCRC1 and UQCRC2) and 6 low-molecular weight proteins (UQCRH/QCR6, UQCRB/QCR7, UQCRQ/QCR8, UQCR10/QCR9, UQCR11/QCR10 and a cleavage product of UQCRFS1). This cytochrome bc1 complex then forms a dimer.</text>
</comment>
<comment type="subcellular location">
    <subcellularLocation>
        <location evidence="2">Mitochondrion inner membrane</location>
        <topology evidence="2">Multi-pass membrane protein</topology>
    </subcellularLocation>
</comment>
<comment type="miscellaneous">
    <text evidence="1">Heme 1 (or BL or b562) is low-potential and absorbs at about 562 nm, and heme 2 (or BH or b566) is high-potential and absorbs at about 566 nm.</text>
</comment>
<comment type="similarity">
    <text evidence="3 4">Belongs to the cytochrome b family.</text>
</comment>
<comment type="caution">
    <text evidence="2">The full-length protein contains only eight transmembrane helices, not nine as predicted by bioinformatics tools.</text>
</comment>
<geneLocation type="mitochondrion"/>
<dbReference type="EMBL" id="Y12025">
    <property type="protein sequence ID" value="CAA72755.1"/>
    <property type="molecule type" value="Genomic_DNA"/>
</dbReference>
<dbReference type="EMBL" id="U76055">
    <property type="protein sequence ID" value="AAB61327.1"/>
    <property type="molecule type" value="Genomic_DNA"/>
</dbReference>
<dbReference type="EMBL" id="AF338715">
    <property type="protein sequence ID" value="AAK53350.1"/>
    <property type="molecule type" value="Genomic_DNA"/>
</dbReference>
<dbReference type="EMBL" id="AF069431">
    <property type="protein sequence ID" value="AAD09392.1"/>
    <property type="molecule type" value="Genomic_DNA"/>
</dbReference>
<dbReference type="PIR" id="D90613">
    <property type="entry name" value="D90613"/>
</dbReference>
<dbReference type="PIR" id="T11530">
    <property type="entry name" value="T11530"/>
</dbReference>
<dbReference type="RefSeq" id="NP_115452.1">
    <property type="nucleotide sequence ID" value="NC_002785.1"/>
</dbReference>
<dbReference type="SMR" id="O03548"/>
<dbReference type="GeneID" id="803278"/>
<dbReference type="CTD" id="4519"/>
<dbReference type="GO" id="GO:0005743">
    <property type="term" value="C:mitochondrial inner membrane"/>
    <property type="evidence" value="ECO:0007669"/>
    <property type="project" value="UniProtKB-SubCell"/>
</dbReference>
<dbReference type="GO" id="GO:0045275">
    <property type="term" value="C:respiratory chain complex III"/>
    <property type="evidence" value="ECO:0007669"/>
    <property type="project" value="InterPro"/>
</dbReference>
<dbReference type="GO" id="GO:0046872">
    <property type="term" value="F:metal ion binding"/>
    <property type="evidence" value="ECO:0007669"/>
    <property type="project" value="UniProtKB-KW"/>
</dbReference>
<dbReference type="GO" id="GO:0008121">
    <property type="term" value="F:ubiquinol-cytochrome-c reductase activity"/>
    <property type="evidence" value="ECO:0007669"/>
    <property type="project" value="InterPro"/>
</dbReference>
<dbReference type="GO" id="GO:0006122">
    <property type="term" value="P:mitochondrial electron transport, ubiquinol to cytochrome c"/>
    <property type="evidence" value="ECO:0007669"/>
    <property type="project" value="TreeGrafter"/>
</dbReference>
<dbReference type="CDD" id="cd00290">
    <property type="entry name" value="cytochrome_b_C"/>
    <property type="match status" value="1"/>
</dbReference>
<dbReference type="CDD" id="cd00284">
    <property type="entry name" value="Cytochrome_b_N"/>
    <property type="match status" value="1"/>
</dbReference>
<dbReference type="FunFam" id="1.20.810.10:FF:000002">
    <property type="entry name" value="Cytochrome b"/>
    <property type="match status" value="1"/>
</dbReference>
<dbReference type="Gene3D" id="1.20.810.10">
    <property type="entry name" value="Cytochrome Bc1 Complex, Chain C"/>
    <property type="match status" value="1"/>
</dbReference>
<dbReference type="InterPro" id="IPR005798">
    <property type="entry name" value="Cyt_b/b6_C"/>
</dbReference>
<dbReference type="InterPro" id="IPR036150">
    <property type="entry name" value="Cyt_b/b6_C_sf"/>
</dbReference>
<dbReference type="InterPro" id="IPR005797">
    <property type="entry name" value="Cyt_b/b6_N"/>
</dbReference>
<dbReference type="InterPro" id="IPR027387">
    <property type="entry name" value="Cytb/b6-like_sf"/>
</dbReference>
<dbReference type="InterPro" id="IPR030689">
    <property type="entry name" value="Cytochrome_b"/>
</dbReference>
<dbReference type="InterPro" id="IPR048260">
    <property type="entry name" value="Cytochrome_b_C_euk/bac"/>
</dbReference>
<dbReference type="InterPro" id="IPR048259">
    <property type="entry name" value="Cytochrome_b_N_euk/bac"/>
</dbReference>
<dbReference type="InterPro" id="IPR016174">
    <property type="entry name" value="Di-haem_cyt_TM"/>
</dbReference>
<dbReference type="PANTHER" id="PTHR19271">
    <property type="entry name" value="CYTOCHROME B"/>
    <property type="match status" value="1"/>
</dbReference>
<dbReference type="PANTHER" id="PTHR19271:SF16">
    <property type="entry name" value="CYTOCHROME B"/>
    <property type="match status" value="1"/>
</dbReference>
<dbReference type="Pfam" id="PF00032">
    <property type="entry name" value="Cytochrom_B_C"/>
    <property type="match status" value="1"/>
</dbReference>
<dbReference type="Pfam" id="PF00033">
    <property type="entry name" value="Cytochrome_B"/>
    <property type="match status" value="1"/>
</dbReference>
<dbReference type="PIRSF" id="PIRSF038885">
    <property type="entry name" value="COB"/>
    <property type="match status" value="1"/>
</dbReference>
<dbReference type="SUPFAM" id="SSF81648">
    <property type="entry name" value="a domain/subunit of cytochrome bc1 complex (Ubiquinol-cytochrome c reductase)"/>
    <property type="match status" value="1"/>
</dbReference>
<dbReference type="SUPFAM" id="SSF81342">
    <property type="entry name" value="Transmembrane di-heme cytochromes"/>
    <property type="match status" value="1"/>
</dbReference>
<dbReference type="PROSITE" id="PS51003">
    <property type="entry name" value="CYTB_CTER"/>
    <property type="match status" value="1"/>
</dbReference>
<dbReference type="PROSITE" id="PS51002">
    <property type="entry name" value="CYTB_NTER"/>
    <property type="match status" value="1"/>
</dbReference>
<name>CYB_STRCA</name>
<gene>
    <name type="primary">MT-CYB</name>
    <name type="synonym">COB</name>
    <name type="synonym">CYTB</name>
    <name type="synonym">MTCYB</name>
</gene>
<keyword id="KW-0249">Electron transport</keyword>
<keyword id="KW-0349">Heme</keyword>
<keyword id="KW-0408">Iron</keyword>
<keyword id="KW-0472">Membrane</keyword>
<keyword id="KW-0479">Metal-binding</keyword>
<keyword id="KW-0496">Mitochondrion</keyword>
<keyword id="KW-0999">Mitochondrion inner membrane</keyword>
<keyword id="KW-0679">Respiratory chain</keyword>
<keyword id="KW-0812">Transmembrane</keyword>
<keyword id="KW-1133">Transmembrane helix</keyword>
<keyword id="KW-0813">Transport</keyword>
<keyword id="KW-0830">Ubiquinone</keyword>
<sequence>MAPNIRKSHPLLKIINNSLIDLPSPSNISAWWNFGSLLGICLITQILTGLLLAMHYTADTTLAFSSVAHTCRNVQYGWFIRNLHANGASFFFICIYLHIGRGLYYGSYLYKETWNTGVILLLTLMATAFVGYVLPWGQMSFWGATVITNLFSAIPYIGQTLVEWAWGGFSVDNPTLTRFFALHFLLPFVIAGITLVHLTFLHESGSNNPLGIISHCDKIPFHPYFSLKDILGFTLMFIPLLSLAFFSPNLLGDPENFTPANPLATPPHIKPEWYFLFAYAILRSIPNKLGGVLALAASVLILFLIPLLHKSKQRSMTFRPLSQLLFWFLVANLLILTWIGSQPVEHPFIIIGQVASFTYFLILLVLFPAIAALENKMIY</sequence>
<protein>
    <recommendedName>
        <fullName>Cytochrome b</fullName>
    </recommendedName>
    <alternativeName>
        <fullName>Complex III subunit 3</fullName>
    </alternativeName>
    <alternativeName>
        <fullName>Complex III subunit III</fullName>
    </alternativeName>
    <alternativeName>
        <fullName>Cytochrome b-c1 complex subunit 3</fullName>
    </alternativeName>
    <alternativeName>
        <fullName>Ubiquinol-cytochrome-c reductase complex cytochrome b subunit</fullName>
    </alternativeName>
</protein>
<reference key="1">
    <citation type="journal article" date="1997" name="Mol. Biol. Evol.">
        <title>The mtDNA sequence of the ostrich and the divergence between paleognathous and neognathous birds.</title>
        <authorList>
            <person name="Harlid A."/>
            <person name="Janke A."/>
            <person name="Arnason U."/>
        </authorList>
    </citation>
    <scope>NUCLEOTIDE SEQUENCE [GENOMIC DNA]</scope>
</reference>
<reference key="2">
    <citation type="book" date="1997" name="Avian molecular evolution and systematics">
        <title>Phylogenetic relationships of the ratite birds: resolving conflicts between molecular and morphological data sets.</title>
        <editorList>
            <person name="Mindell D.P."/>
        </editorList>
        <authorList>
            <person name="Lee K."/>
            <person name="Feinstein J."/>
            <person name="Cracraft J."/>
        </authorList>
    </citation>
    <scope>NUCLEOTIDE SEQUENCE [GENOMIC DNA]</scope>
</reference>
<reference key="3">
    <citation type="journal article" date="2001" name="Proc. R. Soc. B">
        <title>Complete mitochondrial DNA genome sequences of extinct birds: ratite phylogenetics and the vicariance biogeography hypothesis.</title>
        <authorList>
            <person name="Haddrath O."/>
            <person name="Baker A.J."/>
        </authorList>
    </citation>
    <scope>NUCLEOTIDE SEQUENCE [GENOMIC DNA]</scope>
</reference>
<reference key="4">
    <citation type="submission" date="1998-06" db="EMBL/GenBank/DDBJ databases">
        <title>Primers for a PCR-based approach to complete mitochondrial genome sequencing.</title>
        <authorList>
            <person name="Sorenson M.D."/>
            <person name="Dimcheff D.E."/>
            <person name="Ast J.C."/>
            <person name="Yuri T."/>
            <person name="Mindell D.P."/>
        </authorList>
    </citation>
    <scope>NUCLEOTIDE SEQUENCE [GENOMIC DNA] OF 34-379</scope>
</reference>
<feature type="chain" id="PRO_0000061618" description="Cytochrome b">
    <location>
        <begin position="1"/>
        <end position="379"/>
    </location>
</feature>
<feature type="transmembrane region" description="Helical" evidence="2">
    <location>
        <begin position="34"/>
        <end position="54"/>
    </location>
</feature>
<feature type="transmembrane region" description="Helical" evidence="2">
    <location>
        <begin position="78"/>
        <end position="99"/>
    </location>
</feature>
<feature type="transmembrane region" description="Helical" evidence="2">
    <location>
        <begin position="114"/>
        <end position="134"/>
    </location>
</feature>
<feature type="transmembrane region" description="Helical" evidence="2">
    <location>
        <begin position="179"/>
        <end position="199"/>
    </location>
</feature>
<feature type="transmembrane region" description="Helical" evidence="2">
    <location>
        <begin position="227"/>
        <end position="247"/>
    </location>
</feature>
<feature type="transmembrane region" description="Helical" evidence="2">
    <location>
        <begin position="289"/>
        <end position="309"/>
    </location>
</feature>
<feature type="transmembrane region" description="Helical" evidence="2">
    <location>
        <begin position="321"/>
        <end position="341"/>
    </location>
</feature>
<feature type="transmembrane region" description="Helical" evidence="2">
    <location>
        <begin position="348"/>
        <end position="368"/>
    </location>
</feature>
<feature type="binding site" description="axial binding residue" evidence="2">
    <location>
        <position position="84"/>
    </location>
    <ligand>
        <name>heme b</name>
        <dbReference type="ChEBI" id="CHEBI:60344"/>
        <label>b562</label>
    </ligand>
    <ligandPart>
        <name>Fe</name>
        <dbReference type="ChEBI" id="CHEBI:18248"/>
    </ligandPart>
</feature>
<feature type="binding site" description="axial binding residue" evidence="2">
    <location>
        <position position="98"/>
    </location>
    <ligand>
        <name>heme b</name>
        <dbReference type="ChEBI" id="CHEBI:60344"/>
        <label>b566</label>
    </ligand>
    <ligandPart>
        <name>Fe</name>
        <dbReference type="ChEBI" id="CHEBI:18248"/>
    </ligandPart>
</feature>
<feature type="binding site" description="axial binding residue" evidence="2">
    <location>
        <position position="183"/>
    </location>
    <ligand>
        <name>heme b</name>
        <dbReference type="ChEBI" id="CHEBI:60344"/>
        <label>b562</label>
    </ligand>
    <ligandPart>
        <name>Fe</name>
        <dbReference type="ChEBI" id="CHEBI:18248"/>
    </ligandPart>
</feature>
<feature type="binding site" description="axial binding residue" evidence="2">
    <location>
        <position position="197"/>
    </location>
    <ligand>
        <name>heme b</name>
        <dbReference type="ChEBI" id="CHEBI:60344"/>
        <label>b566</label>
    </ligand>
    <ligandPart>
        <name>Fe</name>
        <dbReference type="ChEBI" id="CHEBI:18248"/>
    </ligandPart>
</feature>
<feature type="binding site" evidence="2">
    <location>
        <position position="202"/>
    </location>
    <ligand>
        <name>a ubiquinone</name>
        <dbReference type="ChEBI" id="CHEBI:16389"/>
    </ligand>
</feature>
<proteinExistence type="inferred from homology"/>
<accession>O03548</accession>
<evidence type="ECO:0000250" key="1"/>
<evidence type="ECO:0000250" key="2">
    <source>
        <dbReference type="UniProtKB" id="P00157"/>
    </source>
</evidence>
<evidence type="ECO:0000255" key="3">
    <source>
        <dbReference type="PROSITE-ProRule" id="PRU00967"/>
    </source>
</evidence>
<evidence type="ECO:0000255" key="4">
    <source>
        <dbReference type="PROSITE-ProRule" id="PRU00968"/>
    </source>
</evidence>
<organism>
    <name type="scientific">Struthio camelus</name>
    <name type="common">Common ostrich</name>
    <dbReference type="NCBI Taxonomy" id="8801"/>
    <lineage>
        <taxon>Eukaryota</taxon>
        <taxon>Metazoa</taxon>
        <taxon>Chordata</taxon>
        <taxon>Craniata</taxon>
        <taxon>Vertebrata</taxon>
        <taxon>Euteleostomi</taxon>
        <taxon>Archelosauria</taxon>
        <taxon>Archosauria</taxon>
        <taxon>Dinosauria</taxon>
        <taxon>Saurischia</taxon>
        <taxon>Theropoda</taxon>
        <taxon>Coelurosauria</taxon>
        <taxon>Aves</taxon>
        <taxon>Palaeognathae</taxon>
        <taxon>Struthioniformes</taxon>
        <taxon>Struthionidae</taxon>
        <taxon>Struthio</taxon>
    </lineage>
</organism>